<protein>
    <recommendedName>
        <fullName>NAD-dependent malic enzyme</fullName>
        <shortName>NAD-ME</shortName>
        <ecNumber>1.1.1.38</ecNumber>
    </recommendedName>
</protein>
<organism>
    <name type="scientific">Schizosaccharomyces pombe (strain 972 / ATCC 24843)</name>
    <name type="common">Fission yeast</name>
    <dbReference type="NCBI Taxonomy" id="284812"/>
    <lineage>
        <taxon>Eukaryota</taxon>
        <taxon>Fungi</taxon>
        <taxon>Dikarya</taxon>
        <taxon>Ascomycota</taxon>
        <taxon>Taphrinomycotina</taxon>
        <taxon>Schizosaccharomycetes</taxon>
        <taxon>Schizosaccharomycetales</taxon>
        <taxon>Schizosaccharomycetaceae</taxon>
        <taxon>Schizosaccharomyces</taxon>
    </lineage>
</organism>
<dbReference type="EC" id="1.1.1.38"/>
<dbReference type="EMBL" id="U00621">
    <property type="protein sequence ID" value="AAA18985.1"/>
    <property type="molecule type" value="Genomic_DNA"/>
</dbReference>
<dbReference type="EMBL" id="EF125016">
    <property type="protein sequence ID" value="ABL67725.1"/>
    <property type="molecule type" value="Genomic_DNA"/>
</dbReference>
<dbReference type="EMBL" id="CU329672">
    <property type="protein sequence ID" value="CAA19139.1"/>
    <property type="molecule type" value="Genomic_DNA"/>
</dbReference>
<dbReference type="PIR" id="S44330">
    <property type="entry name" value="S44330"/>
</dbReference>
<dbReference type="RefSeq" id="NP_587760.1">
    <property type="nucleotide sequence ID" value="NM_001022753.2"/>
</dbReference>
<dbReference type="SMR" id="P40375"/>
<dbReference type="BioGRID" id="276150">
    <property type="interactions" value="7"/>
</dbReference>
<dbReference type="FunCoup" id="P40375">
    <property type="interactions" value="421"/>
</dbReference>
<dbReference type="STRING" id="284812.P40375"/>
<dbReference type="iPTMnet" id="P40375"/>
<dbReference type="PaxDb" id="4896-SPCC794.12c.1"/>
<dbReference type="EnsemblFungi" id="SPCC794.12c.1">
    <property type="protein sequence ID" value="SPCC794.12c.1:pep"/>
    <property type="gene ID" value="SPCC794.12c"/>
</dbReference>
<dbReference type="GeneID" id="2539592"/>
<dbReference type="KEGG" id="spo:2539592"/>
<dbReference type="PomBase" id="SPCC794.12c">
    <property type="gene designation" value="mae2"/>
</dbReference>
<dbReference type="VEuPathDB" id="FungiDB:SPCC794.12c"/>
<dbReference type="eggNOG" id="KOG1257">
    <property type="taxonomic scope" value="Eukaryota"/>
</dbReference>
<dbReference type="HOGENOM" id="CLU_011405_5_2_1"/>
<dbReference type="InParanoid" id="P40375"/>
<dbReference type="OMA" id="QIVNHMV"/>
<dbReference type="PhylomeDB" id="P40375"/>
<dbReference type="PRO" id="PR:P40375"/>
<dbReference type="Proteomes" id="UP000002485">
    <property type="component" value="Chromosome III"/>
</dbReference>
<dbReference type="GO" id="GO:0005829">
    <property type="term" value="C:cytosol"/>
    <property type="evidence" value="ECO:0007005"/>
    <property type="project" value="PomBase"/>
</dbReference>
<dbReference type="GO" id="GO:0005739">
    <property type="term" value="C:mitochondrion"/>
    <property type="evidence" value="ECO:0000318"/>
    <property type="project" value="GO_Central"/>
</dbReference>
<dbReference type="GO" id="GO:0004471">
    <property type="term" value="F:malate dehydrogenase (decarboxylating) (NAD+) activity"/>
    <property type="evidence" value="ECO:0000314"/>
    <property type="project" value="PomBase"/>
</dbReference>
<dbReference type="GO" id="GO:0046872">
    <property type="term" value="F:metal ion binding"/>
    <property type="evidence" value="ECO:0007669"/>
    <property type="project" value="UniProtKB-KW"/>
</dbReference>
<dbReference type="GO" id="GO:0051287">
    <property type="term" value="F:NAD binding"/>
    <property type="evidence" value="ECO:0007669"/>
    <property type="project" value="InterPro"/>
</dbReference>
<dbReference type="GO" id="GO:0008948">
    <property type="term" value="F:oxaloacetate decarboxylase activity"/>
    <property type="evidence" value="ECO:0007669"/>
    <property type="project" value="RHEA"/>
</dbReference>
<dbReference type="GO" id="GO:0006108">
    <property type="term" value="P:malate metabolic process"/>
    <property type="evidence" value="ECO:0000315"/>
    <property type="project" value="PomBase"/>
</dbReference>
<dbReference type="GO" id="GO:0006090">
    <property type="term" value="P:pyruvate metabolic process"/>
    <property type="evidence" value="ECO:0000318"/>
    <property type="project" value="GO_Central"/>
</dbReference>
<dbReference type="CDD" id="cd05312">
    <property type="entry name" value="NAD_bind_1_malic_enz"/>
    <property type="match status" value="1"/>
</dbReference>
<dbReference type="FunFam" id="3.40.50.720:FF:000635">
    <property type="entry name" value="NADP-dependent malic enzyme"/>
    <property type="match status" value="1"/>
</dbReference>
<dbReference type="Gene3D" id="3.40.50.10380">
    <property type="entry name" value="Malic enzyme, N-terminal domain"/>
    <property type="match status" value="1"/>
</dbReference>
<dbReference type="Gene3D" id="3.40.50.720">
    <property type="entry name" value="NAD(P)-binding Rossmann-like Domain"/>
    <property type="match status" value="1"/>
</dbReference>
<dbReference type="InterPro" id="IPR046346">
    <property type="entry name" value="Aminoacid_DH-like_N_sf"/>
</dbReference>
<dbReference type="InterPro" id="IPR015884">
    <property type="entry name" value="Malic_enzyme_CS"/>
</dbReference>
<dbReference type="InterPro" id="IPR012301">
    <property type="entry name" value="Malic_N_dom"/>
</dbReference>
<dbReference type="InterPro" id="IPR037062">
    <property type="entry name" value="Malic_N_dom_sf"/>
</dbReference>
<dbReference type="InterPro" id="IPR012302">
    <property type="entry name" value="Malic_NAD-bd"/>
</dbReference>
<dbReference type="InterPro" id="IPR001891">
    <property type="entry name" value="Malic_OxRdtase"/>
</dbReference>
<dbReference type="InterPro" id="IPR036291">
    <property type="entry name" value="NAD(P)-bd_dom_sf"/>
</dbReference>
<dbReference type="NCBIfam" id="NF010052">
    <property type="entry name" value="PRK13529.1"/>
    <property type="match status" value="1"/>
</dbReference>
<dbReference type="PANTHER" id="PTHR23406">
    <property type="entry name" value="MALIC ENZYME-RELATED"/>
    <property type="match status" value="1"/>
</dbReference>
<dbReference type="PANTHER" id="PTHR23406:SF34">
    <property type="entry name" value="NAD-DEPENDENT MALIC ENZYME, MITOCHONDRIAL"/>
    <property type="match status" value="1"/>
</dbReference>
<dbReference type="Pfam" id="PF00390">
    <property type="entry name" value="malic"/>
    <property type="match status" value="1"/>
</dbReference>
<dbReference type="Pfam" id="PF03949">
    <property type="entry name" value="Malic_M"/>
    <property type="match status" value="1"/>
</dbReference>
<dbReference type="PIRSF" id="PIRSF000106">
    <property type="entry name" value="ME"/>
    <property type="match status" value="1"/>
</dbReference>
<dbReference type="PRINTS" id="PR00072">
    <property type="entry name" value="MALOXRDTASE"/>
</dbReference>
<dbReference type="SMART" id="SM01274">
    <property type="entry name" value="malic"/>
    <property type="match status" value="1"/>
</dbReference>
<dbReference type="SMART" id="SM00919">
    <property type="entry name" value="Malic_M"/>
    <property type="match status" value="1"/>
</dbReference>
<dbReference type="SUPFAM" id="SSF53223">
    <property type="entry name" value="Aminoacid dehydrogenase-like, N-terminal domain"/>
    <property type="match status" value="1"/>
</dbReference>
<dbReference type="SUPFAM" id="SSF51735">
    <property type="entry name" value="NAD(P)-binding Rossmann-fold domains"/>
    <property type="match status" value="1"/>
</dbReference>
<dbReference type="PROSITE" id="PS00331">
    <property type="entry name" value="MALIC_ENZYMES"/>
    <property type="match status" value="1"/>
</dbReference>
<proteinExistence type="evidence at protein level"/>
<evidence type="ECO:0000250" key="1"/>
<evidence type="ECO:0000269" key="2">
    <source>
    </source>
</evidence>
<evidence type="ECO:0000305" key="3"/>
<feature type="chain" id="PRO_0000160205" description="NAD-dependent malic enzyme">
    <location>
        <begin position="1"/>
        <end position="565"/>
    </location>
</feature>
<feature type="active site" description="Proton donor" evidence="1">
    <location>
        <position position="103"/>
    </location>
</feature>
<feature type="active site" description="Proton acceptor" evidence="1">
    <location>
        <position position="177"/>
    </location>
</feature>
<feature type="binding site" evidence="1">
    <location>
        <position position="248"/>
    </location>
    <ligand>
        <name>a divalent metal cation</name>
        <dbReference type="ChEBI" id="CHEBI:60240"/>
    </ligand>
</feature>
<feature type="binding site" evidence="1">
    <location>
        <position position="249"/>
    </location>
    <ligand>
        <name>a divalent metal cation</name>
        <dbReference type="ChEBI" id="CHEBI:60240"/>
    </ligand>
</feature>
<feature type="binding site" evidence="1">
    <location>
        <position position="272"/>
    </location>
    <ligand>
        <name>a divalent metal cation</name>
        <dbReference type="ChEBI" id="CHEBI:60240"/>
    </ligand>
</feature>
<feature type="binding site" evidence="1">
    <location>
        <position position="272"/>
    </location>
    <ligand>
        <name>NAD(+)</name>
        <dbReference type="ChEBI" id="CHEBI:57540"/>
    </ligand>
</feature>
<feature type="binding site" evidence="1">
    <location>
        <position position="419"/>
    </location>
    <ligand>
        <name>NAD(+)</name>
        <dbReference type="ChEBI" id="CHEBI:57540"/>
    </ligand>
</feature>
<feature type="site" description="Important for activity" evidence="1">
    <location>
        <position position="272"/>
    </location>
</feature>
<feature type="modified residue" description="Phosphoserine" evidence="2">
    <location>
        <position position="445"/>
    </location>
</feature>
<gene>
    <name type="primary">mae2</name>
    <name type="ORF">SPCC794.12c</name>
</gene>
<comment type="catalytic activity">
    <reaction>
        <text>(S)-malate + NAD(+) = pyruvate + CO2 + NADH</text>
        <dbReference type="Rhea" id="RHEA:12653"/>
        <dbReference type="ChEBI" id="CHEBI:15361"/>
        <dbReference type="ChEBI" id="CHEBI:15589"/>
        <dbReference type="ChEBI" id="CHEBI:16526"/>
        <dbReference type="ChEBI" id="CHEBI:57540"/>
        <dbReference type="ChEBI" id="CHEBI:57945"/>
        <dbReference type="EC" id="1.1.1.38"/>
    </reaction>
</comment>
<comment type="catalytic activity">
    <reaction>
        <text>oxaloacetate + H(+) = pyruvate + CO2</text>
        <dbReference type="Rhea" id="RHEA:15641"/>
        <dbReference type="ChEBI" id="CHEBI:15361"/>
        <dbReference type="ChEBI" id="CHEBI:15378"/>
        <dbReference type="ChEBI" id="CHEBI:16452"/>
        <dbReference type="ChEBI" id="CHEBI:16526"/>
        <dbReference type="EC" id="1.1.1.38"/>
    </reaction>
</comment>
<comment type="cofactor">
    <cofactor evidence="1">
        <name>Mg(2+)</name>
        <dbReference type="ChEBI" id="CHEBI:18420"/>
    </cofactor>
    <cofactor evidence="1">
        <name>Mn(2+)</name>
        <dbReference type="ChEBI" id="CHEBI:29035"/>
    </cofactor>
    <text evidence="1">Divalent metal cations. Prefers magnesium or manganese.</text>
</comment>
<comment type="similarity">
    <text evidence="3">Belongs to the malic enzymes family.</text>
</comment>
<reference key="1">
    <citation type="journal article" date="1994" name="Yeast">
        <title>Molecular analysis of the malic enzyme gene (mae2) of Schizosaccharomyces pombe.</title>
        <authorList>
            <person name="Viljoen M."/>
            <person name="Subden R.E."/>
            <person name="Krizus A."/>
            <person name="van Vuuren H.J.J."/>
        </authorList>
    </citation>
    <scope>NUCLEOTIDE SEQUENCE [GENOMIC DNA]</scope>
    <source>
        <strain>972 / ATCC 24843</strain>
    </source>
</reference>
<reference key="2">
    <citation type="submission" date="2006-11" db="EMBL/GenBank/DDBJ databases">
        <title>Sequencing and analysis of malate degradation related enzyme gene from Schizosaccharomyces pombe.</title>
        <authorList>
            <person name="Li A."/>
            <person name="Su X."/>
            <person name="Zhang W."/>
        </authorList>
    </citation>
    <scope>NUCLEOTIDE SEQUENCE [GENOMIC DNA]</scope>
</reference>
<reference key="3">
    <citation type="journal article" date="2002" name="Nature">
        <title>The genome sequence of Schizosaccharomyces pombe.</title>
        <authorList>
            <person name="Wood V."/>
            <person name="Gwilliam R."/>
            <person name="Rajandream M.A."/>
            <person name="Lyne M.H."/>
            <person name="Lyne R."/>
            <person name="Stewart A."/>
            <person name="Sgouros J.G."/>
            <person name="Peat N."/>
            <person name="Hayles J."/>
            <person name="Baker S.G."/>
            <person name="Basham D."/>
            <person name="Bowman S."/>
            <person name="Brooks K."/>
            <person name="Brown D."/>
            <person name="Brown S."/>
            <person name="Chillingworth T."/>
            <person name="Churcher C.M."/>
            <person name="Collins M."/>
            <person name="Connor R."/>
            <person name="Cronin A."/>
            <person name="Davis P."/>
            <person name="Feltwell T."/>
            <person name="Fraser A."/>
            <person name="Gentles S."/>
            <person name="Goble A."/>
            <person name="Hamlin N."/>
            <person name="Harris D.E."/>
            <person name="Hidalgo J."/>
            <person name="Hodgson G."/>
            <person name="Holroyd S."/>
            <person name="Hornsby T."/>
            <person name="Howarth S."/>
            <person name="Huckle E.J."/>
            <person name="Hunt S."/>
            <person name="Jagels K."/>
            <person name="James K.D."/>
            <person name="Jones L."/>
            <person name="Jones M."/>
            <person name="Leather S."/>
            <person name="McDonald S."/>
            <person name="McLean J."/>
            <person name="Mooney P."/>
            <person name="Moule S."/>
            <person name="Mungall K.L."/>
            <person name="Murphy L.D."/>
            <person name="Niblett D."/>
            <person name="Odell C."/>
            <person name="Oliver K."/>
            <person name="O'Neil S."/>
            <person name="Pearson D."/>
            <person name="Quail M.A."/>
            <person name="Rabbinowitsch E."/>
            <person name="Rutherford K.M."/>
            <person name="Rutter S."/>
            <person name="Saunders D."/>
            <person name="Seeger K."/>
            <person name="Sharp S."/>
            <person name="Skelton J."/>
            <person name="Simmonds M.N."/>
            <person name="Squares R."/>
            <person name="Squares S."/>
            <person name="Stevens K."/>
            <person name="Taylor K."/>
            <person name="Taylor R.G."/>
            <person name="Tivey A."/>
            <person name="Walsh S.V."/>
            <person name="Warren T."/>
            <person name="Whitehead S."/>
            <person name="Woodward J.R."/>
            <person name="Volckaert G."/>
            <person name="Aert R."/>
            <person name="Robben J."/>
            <person name="Grymonprez B."/>
            <person name="Weltjens I."/>
            <person name="Vanstreels E."/>
            <person name="Rieger M."/>
            <person name="Schaefer M."/>
            <person name="Mueller-Auer S."/>
            <person name="Gabel C."/>
            <person name="Fuchs M."/>
            <person name="Duesterhoeft A."/>
            <person name="Fritzc C."/>
            <person name="Holzer E."/>
            <person name="Moestl D."/>
            <person name="Hilbert H."/>
            <person name="Borzym K."/>
            <person name="Langer I."/>
            <person name="Beck A."/>
            <person name="Lehrach H."/>
            <person name="Reinhardt R."/>
            <person name="Pohl T.M."/>
            <person name="Eger P."/>
            <person name="Zimmermann W."/>
            <person name="Wedler H."/>
            <person name="Wambutt R."/>
            <person name="Purnelle B."/>
            <person name="Goffeau A."/>
            <person name="Cadieu E."/>
            <person name="Dreano S."/>
            <person name="Gloux S."/>
            <person name="Lelaure V."/>
            <person name="Mottier S."/>
            <person name="Galibert F."/>
            <person name="Aves S.J."/>
            <person name="Xiang Z."/>
            <person name="Hunt C."/>
            <person name="Moore K."/>
            <person name="Hurst S.M."/>
            <person name="Lucas M."/>
            <person name="Rochet M."/>
            <person name="Gaillardin C."/>
            <person name="Tallada V.A."/>
            <person name="Garzon A."/>
            <person name="Thode G."/>
            <person name="Daga R.R."/>
            <person name="Cruzado L."/>
            <person name="Jimenez J."/>
            <person name="Sanchez M."/>
            <person name="del Rey F."/>
            <person name="Benito J."/>
            <person name="Dominguez A."/>
            <person name="Revuelta J.L."/>
            <person name="Moreno S."/>
            <person name="Armstrong J."/>
            <person name="Forsburg S.L."/>
            <person name="Cerutti L."/>
            <person name="Lowe T."/>
            <person name="McCombie W.R."/>
            <person name="Paulsen I."/>
            <person name="Potashkin J."/>
            <person name="Shpakovski G.V."/>
            <person name="Ussery D."/>
            <person name="Barrell B.G."/>
            <person name="Nurse P."/>
        </authorList>
    </citation>
    <scope>NUCLEOTIDE SEQUENCE [LARGE SCALE GENOMIC DNA]</scope>
    <source>
        <strain>972 / ATCC 24843</strain>
    </source>
</reference>
<reference key="4">
    <citation type="journal article" date="2008" name="J. Proteome Res.">
        <title>Phosphoproteome analysis of fission yeast.</title>
        <authorList>
            <person name="Wilson-Grady J.T."/>
            <person name="Villen J."/>
            <person name="Gygi S.P."/>
        </authorList>
    </citation>
    <scope>PHOSPHORYLATION [LARGE SCALE ANALYSIS] AT SER-445</scope>
    <scope>IDENTIFICATION BY MASS SPECTROMETRY</scope>
</reference>
<sequence>MPAGTKEQIECPLKGVTLLNSPRYNKDTAFTPEERQKFEISSRLPPIVETLQQQVDRCYDQYKAIGDEPLQKNLYLSQLSVTNQTLFYALISQHLIEMIPIIYTPTEGDAIKQFSDIYRYPEGCYLDIDHNDLSYIKQQLSEFGKSDSVEYIIITDSEGILGIGDQGVGGVLISVAKGHLMTLCAGLDPNRFLPIVLDVGTNNETHRKNHQYMGLRKDRVRGEQYDSFLDNVIKAIREVFPEAFIHFEDFGLANAKRILDHYRPDIACFNDDIQGTGAVALAAIIGALHVTKSPLTEQRIMIFGAGTAGVGIANQIVAGMVTDGLSLDKARGNLFMIDRCGLLLERHAKIATDGQKPFLKKDSDFKEVPSGDINLESAIALVKPTILLGCSGQPGKFTEKAIREMSKHVERPIIFPISNPTTLMEAKPDQIDKWSDGKALIATGSPLPPLNRNGKKYVISQCNNALLYPALGVACVLSRCKLLSDGMLKAASDALATVPRSLFAADEALLPDLNNAREISRHIVFAVLKQAVSEGMSTVDLPKDDAKLKEWIIEREWNPEYKPFV</sequence>
<keyword id="KW-0479">Metal-binding</keyword>
<keyword id="KW-0520">NAD</keyword>
<keyword id="KW-0560">Oxidoreductase</keyword>
<keyword id="KW-0597">Phosphoprotein</keyword>
<keyword id="KW-1185">Reference proteome</keyword>
<accession>P40375</accession>
<accession>A1EGU1</accession>
<name>MAOX_SCHPO</name>